<keyword id="KW-0131">Cell cycle</keyword>
<keyword id="KW-0132">Cell division</keyword>
<keyword id="KW-0961">Cell wall biogenesis/degradation</keyword>
<keyword id="KW-1185">Reference proteome</keyword>
<keyword id="KW-0677">Repeat</keyword>
<keyword id="KW-0853">WD repeat</keyword>
<proteinExistence type="inferred from homology"/>
<comment type="function">
    <text evidence="1">Involved in cell wall metabolism and required for the separation of the mother and daughter cells.</text>
</comment>
<comment type="similarity">
    <text evidence="3">Belongs to the WD repeat DSE1 family.</text>
</comment>
<accession>Q59Y20</accession>
<accession>A0A1D8PI55</accession>
<protein>
    <recommendedName>
        <fullName>Protein DSE1</fullName>
    </recommendedName>
    <alternativeName>
        <fullName>Daughter-specific expression protein 1</fullName>
    </alternativeName>
</protein>
<dbReference type="EMBL" id="CP017624">
    <property type="protein sequence ID" value="AOW27837.1"/>
    <property type="molecule type" value="Genomic_DNA"/>
</dbReference>
<dbReference type="RefSeq" id="XP_714471.1">
    <property type="nucleotide sequence ID" value="XM_709378.1"/>
</dbReference>
<dbReference type="FunCoup" id="Q59Y20">
    <property type="interactions" value="29"/>
</dbReference>
<dbReference type="STRING" id="237561.Q59Y20"/>
<dbReference type="EnsemblFungi" id="C2_08490W_A-T">
    <property type="protein sequence ID" value="C2_08490W_A-T-p1"/>
    <property type="gene ID" value="C2_08490W_A"/>
</dbReference>
<dbReference type="GeneID" id="3643899"/>
<dbReference type="KEGG" id="cal:CAALFM_C208490WA"/>
<dbReference type="CGD" id="CAL0000181989">
    <property type="gene designation" value="DSE1"/>
</dbReference>
<dbReference type="VEuPathDB" id="FungiDB:C2_08490W_A"/>
<dbReference type="HOGENOM" id="CLU_016851_0_0_1"/>
<dbReference type="InParanoid" id="Q59Y20"/>
<dbReference type="OrthoDB" id="361494at2759"/>
<dbReference type="PHI-base" id="PHI:3507"/>
<dbReference type="PRO" id="PR:Q59Y20"/>
<dbReference type="Proteomes" id="UP000000559">
    <property type="component" value="Chromosome 2"/>
</dbReference>
<dbReference type="GO" id="GO:0009277">
    <property type="term" value="C:fungal-type cell wall"/>
    <property type="evidence" value="ECO:0000250"/>
    <property type="project" value="CGD"/>
</dbReference>
<dbReference type="GO" id="GO:0034388">
    <property type="term" value="C:Pwp2p-containing subcomplex of 90S preribosome"/>
    <property type="evidence" value="ECO:0000318"/>
    <property type="project" value="GO_Central"/>
</dbReference>
<dbReference type="GO" id="GO:0032040">
    <property type="term" value="C:small-subunit processome"/>
    <property type="evidence" value="ECO:0000318"/>
    <property type="project" value="GO_Central"/>
</dbReference>
<dbReference type="GO" id="GO:0030515">
    <property type="term" value="F:snoRNA binding"/>
    <property type="evidence" value="ECO:0000318"/>
    <property type="project" value="GO_Central"/>
</dbReference>
<dbReference type="GO" id="GO:0007155">
    <property type="term" value="P:cell adhesion"/>
    <property type="evidence" value="ECO:0000315"/>
    <property type="project" value="CGD"/>
</dbReference>
<dbReference type="GO" id="GO:0043709">
    <property type="term" value="P:cell adhesion involved in single-species biofilm formation"/>
    <property type="evidence" value="ECO:0000315"/>
    <property type="project" value="CGD"/>
</dbReference>
<dbReference type="GO" id="GO:0051301">
    <property type="term" value="P:cell division"/>
    <property type="evidence" value="ECO:0007669"/>
    <property type="project" value="UniProtKB-KW"/>
</dbReference>
<dbReference type="GO" id="GO:0071555">
    <property type="term" value="P:cell wall organization"/>
    <property type="evidence" value="ECO:0000315"/>
    <property type="project" value="CGD"/>
</dbReference>
<dbReference type="GO" id="GO:0030447">
    <property type="term" value="P:filamentous growth"/>
    <property type="evidence" value="ECO:0000315"/>
    <property type="project" value="CGD"/>
</dbReference>
<dbReference type="GO" id="GO:0044182">
    <property type="term" value="P:filamentous growth of a population of unicellular organisms"/>
    <property type="evidence" value="ECO:0000315"/>
    <property type="project" value="CGD"/>
</dbReference>
<dbReference type="GO" id="GO:0030490">
    <property type="term" value="P:maturation of SSU-rRNA"/>
    <property type="evidence" value="ECO:0000318"/>
    <property type="project" value="GO_Central"/>
</dbReference>
<dbReference type="GO" id="GO:0044011">
    <property type="term" value="P:single-species biofilm formation on inanimate substrate"/>
    <property type="evidence" value="ECO:0000315"/>
    <property type="project" value="CGD"/>
</dbReference>
<dbReference type="FunFam" id="2.130.10.10:FF:002664">
    <property type="entry name" value="Protein DSE1"/>
    <property type="match status" value="1"/>
</dbReference>
<dbReference type="Gene3D" id="2.130.10.10">
    <property type="entry name" value="YVTN repeat-like/Quinoprotein amine dehydrogenase"/>
    <property type="match status" value="1"/>
</dbReference>
<dbReference type="InterPro" id="IPR015943">
    <property type="entry name" value="WD40/YVTN_repeat-like_dom_sf"/>
</dbReference>
<dbReference type="InterPro" id="IPR019775">
    <property type="entry name" value="WD40_repeat_CS"/>
</dbReference>
<dbReference type="InterPro" id="IPR036322">
    <property type="entry name" value="WD40_repeat_dom_sf"/>
</dbReference>
<dbReference type="InterPro" id="IPR001680">
    <property type="entry name" value="WD40_rpt"/>
</dbReference>
<dbReference type="InterPro" id="IPR050459">
    <property type="entry name" value="WD_repeat_RBAP46/RBAP48/MSI1"/>
</dbReference>
<dbReference type="PANTHER" id="PTHR22850">
    <property type="entry name" value="WD40 REPEAT FAMILY"/>
    <property type="match status" value="1"/>
</dbReference>
<dbReference type="Pfam" id="PF00400">
    <property type="entry name" value="WD40"/>
    <property type="match status" value="2"/>
</dbReference>
<dbReference type="SMART" id="SM00320">
    <property type="entry name" value="WD40"/>
    <property type="match status" value="4"/>
</dbReference>
<dbReference type="SUPFAM" id="SSF50978">
    <property type="entry name" value="WD40 repeat-like"/>
    <property type="match status" value="1"/>
</dbReference>
<dbReference type="PROSITE" id="PS00678">
    <property type="entry name" value="WD_REPEATS_1"/>
    <property type="match status" value="1"/>
</dbReference>
<dbReference type="PROSITE" id="PS50082">
    <property type="entry name" value="WD_REPEATS_2"/>
    <property type="match status" value="2"/>
</dbReference>
<dbReference type="PROSITE" id="PS50294">
    <property type="entry name" value="WD_REPEATS_REGION"/>
    <property type="match status" value="1"/>
</dbReference>
<reference key="1">
    <citation type="journal article" date="2004" name="Proc. Natl. Acad. Sci. U.S.A.">
        <title>The diploid genome sequence of Candida albicans.</title>
        <authorList>
            <person name="Jones T."/>
            <person name="Federspiel N.A."/>
            <person name="Chibana H."/>
            <person name="Dungan J."/>
            <person name="Kalman S."/>
            <person name="Magee B.B."/>
            <person name="Newport G."/>
            <person name="Thorstenson Y.R."/>
            <person name="Agabian N."/>
            <person name="Magee P.T."/>
            <person name="Davis R.W."/>
            <person name="Scherer S."/>
        </authorList>
    </citation>
    <scope>NUCLEOTIDE SEQUENCE [LARGE SCALE GENOMIC DNA]</scope>
    <source>
        <strain>SC5314 / ATCC MYA-2876</strain>
    </source>
</reference>
<reference key="2">
    <citation type="journal article" date="2007" name="Genome Biol.">
        <title>Assembly of the Candida albicans genome into sixteen supercontigs aligned on the eight chromosomes.</title>
        <authorList>
            <person name="van het Hoog M."/>
            <person name="Rast T.J."/>
            <person name="Martchenko M."/>
            <person name="Grindle S."/>
            <person name="Dignard D."/>
            <person name="Hogues H."/>
            <person name="Cuomo C."/>
            <person name="Berriman M."/>
            <person name="Scherer S."/>
            <person name="Magee B.B."/>
            <person name="Whiteway M."/>
            <person name="Chibana H."/>
            <person name="Nantel A."/>
            <person name="Magee P.T."/>
        </authorList>
    </citation>
    <scope>GENOME REANNOTATION</scope>
    <source>
        <strain>SC5314 / ATCC MYA-2876</strain>
    </source>
</reference>
<reference key="3">
    <citation type="journal article" date="2013" name="Genome Biol.">
        <title>Assembly of a phased diploid Candida albicans genome facilitates allele-specific measurements and provides a simple model for repeat and indel structure.</title>
        <authorList>
            <person name="Muzzey D."/>
            <person name="Schwartz K."/>
            <person name="Weissman J.S."/>
            <person name="Sherlock G."/>
        </authorList>
    </citation>
    <scope>NUCLEOTIDE SEQUENCE [LARGE SCALE GENOMIC DNA]</scope>
    <scope>GENOME REANNOTATION</scope>
    <source>
        <strain>SC5314 / ATCC MYA-2876</strain>
    </source>
</reference>
<organism>
    <name type="scientific">Candida albicans (strain SC5314 / ATCC MYA-2876)</name>
    <name type="common">Yeast</name>
    <dbReference type="NCBI Taxonomy" id="237561"/>
    <lineage>
        <taxon>Eukaryota</taxon>
        <taxon>Fungi</taxon>
        <taxon>Dikarya</taxon>
        <taxon>Ascomycota</taxon>
        <taxon>Saccharomycotina</taxon>
        <taxon>Pichiomycetes</taxon>
        <taxon>Debaryomycetaceae</taxon>
        <taxon>Candida/Lodderomyces clade</taxon>
        <taxon>Candida</taxon>
    </lineage>
</organism>
<evidence type="ECO:0000250" key="1"/>
<evidence type="ECO:0000256" key="2">
    <source>
        <dbReference type="SAM" id="MobiDB-lite"/>
    </source>
</evidence>
<evidence type="ECO:0000305" key="3"/>
<sequence length="724" mass="81074">MTDYYEPTFLFRQNAIKRFSPSLSPISSVESLSLVDSNSISNNGTTTTTTTTTSSIYQNASNSSWLLNPYNVKDTAILNQSCCLNRTNVKSNYWKIPDESMNLTSMSINKNQGGNPILAISSGKSESNLFIYELNLFNNHLIHHHTISLPNIHAMKWINNTRYLVTGNNKGYAHLVSTPKLATHDVFNTNSNGDFDYNDDDEDDNNSAEICKRFNHRKHLKQNQLENTISTPIKHLNFLNNHENLLSIYNDYLFYWDIKGCHQQTRPSPISISTVSGIKNFDVPEKNHSSTNTSSANTVAICGLFGVSLFDLRDCQFNIPNYNTAQIHDKTQSSYRKLSANIVKWNPMNTNILAAGHGDGVIRLWDIRKQDSYIAELYGHNNYSITTSMEWNNNDLFTGSKDGNIIHWDLSNISKDSQWEENDNTKLPISCGLKEGFNSIEFNGKANKLETKLDQYQCGTILPASNSSIVAMCSTTTTTSSNDHDDEEIKILSIDSSSFLGVHNKVSESINVNINTNKLYYTEEDIQLLLQSQLNNNNITSSSATGSNDTLISFGNNVSQDSLVKPLTISRKPTTTIKNNNNNTTTRPTNTHTHSASIDESIVSVHNVSNDTLVNSPTRFNICESEDEFTFNYVKNNTNNEDQRQSDNRNSSFSSVSSQQTQLNNSVESLSTVVTDVENEVNHQEHKYMSLLLPVKDTSTTTTTTKDNNTNSDQAVTNTPIISI</sequence>
<name>DSE1_CANAL</name>
<feature type="chain" id="PRO_0000285345" description="Protein DSE1">
    <location>
        <begin position="1"/>
        <end position="724"/>
    </location>
</feature>
<feature type="repeat" description="WD 1">
    <location>
        <begin position="98"/>
        <end position="142"/>
    </location>
</feature>
<feature type="repeat" description="WD 2">
    <location>
        <begin position="147"/>
        <end position="186"/>
    </location>
</feature>
<feature type="repeat" description="WD 3">
    <location>
        <begin position="228"/>
        <end position="266"/>
    </location>
</feature>
<feature type="repeat" description="WD 4">
    <location>
        <begin position="334"/>
        <end position="375"/>
    </location>
</feature>
<feature type="repeat" description="WD 5">
    <location>
        <begin position="379"/>
        <end position="418"/>
    </location>
</feature>
<feature type="region of interest" description="Disordered" evidence="2">
    <location>
        <begin position="569"/>
        <end position="596"/>
    </location>
</feature>
<feature type="region of interest" description="Disordered" evidence="2">
    <location>
        <begin position="638"/>
        <end position="667"/>
    </location>
</feature>
<feature type="region of interest" description="Disordered" evidence="2">
    <location>
        <begin position="699"/>
        <end position="724"/>
    </location>
</feature>
<feature type="compositionally biased region" description="Low complexity" evidence="2">
    <location>
        <begin position="571"/>
        <end position="594"/>
    </location>
</feature>
<feature type="compositionally biased region" description="Low complexity" evidence="2">
    <location>
        <begin position="648"/>
        <end position="662"/>
    </location>
</feature>
<feature type="compositionally biased region" description="Low complexity" evidence="2">
    <location>
        <begin position="699"/>
        <end position="713"/>
    </location>
</feature>
<feature type="compositionally biased region" description="Polar residues" evidence="2">
    <location>
        <begin position="714"/>
        <end position="724"/>
    </location>
</feature>
<gene>
    <name type="primary">DSE1</name>
    <name type="ordered locus">CAALFM_C208490WA</name>
    <name type="ORF">CaO19.11112</name>
    <name type="ORF">CaO19.3629</name>
</gene>